<feature type="chain" id="PRO_1000066240" description="Orotate phosphoribosyltransferase">
    <location>
        <begin position="1"/>
        <end position="221"/>
    </location>
</feature>
<feature type="binding site" description="in other chain" evidence="1">
    <location>
        <position position="26"/>
    </location>
    <ligand>
        <name>5-phospho-alpha-D-ribose 1-diphosphate</name>
        <dbReference type="ChEBI" id="CHEBI:58017"/>
        <note>ligand shared between dimeric partners</note>
    </ligand>
</feature>
<feature type="binding site" evidence="1">
    <location>
        <begin position="34"/>
        <end position="35"/>
    </location>
    <ligand>
        <name>orotate</name>
        <dbReference type="ChEBI" id="CHEBI:30839"/>
    </ligand>
</feature>
<feature type="binding site" description="in other chain" evidence="1">
    <location>
        <begin position="72"/>
        <end position="73"/>
    </location>
    <ligand>
        <name>5-phospho-alpha-D-ribose 1-diphosphate</name>
        <dbReference type="ChEBI" id="CHEBI:58017"/>
        <note>ligand shared between dimeric partners</note>
    </ligand>
</feature>
<feature type="binding site" evidence="1">
    <location>
        <position position="98"/>
    </location>
    <ligand>
        <name>5-phospho-alpha-D-ribose 1-diphosphate</name>
        <dbReference type="ChEBI" id="CHEBI:58017"/>
        <note>ligand shared between dimeric partners</note>
    </ligand>
</feature>
<feature type="binding site" description="in other chain" evidence="1">
    <location>
        <position position="99"/>
    </location>
    <ligand>
        <name>5-phospho-alpha-D-ribose 1-diphosphate</name>
        <dbReference type="ChEBI" id="CHEBI:58017"/>
        <note>ligand shared between dimeric partners</note>
    </ligand>
</feature>
<feature type="binding site" evidence="1">
    <location>
        <position position="102"/>
    </location>
    <ligand>
        <name>5-phospho-alpha-D-ribose 1-diphosphate</name>
        <dbReference type="ChEBI" id="CHEBI:58017"/>
        <note>ligand shared between dimeric partners</note>
    </ligand>
</feature>
<feature type="binding site" evidence="1">
    <location>
        <position position="104"/>
    </location>
    <ligand>
        <name>5-phospho-alpha-D-ribose 1-diphosphate</name>
        <dbReference type="ChEBI" id="CHEBI:58017"/>
        <note>ligand shared between dimeric partners</note>
    </ligand>
</feature>
<feature type="binding site" description="in other chain" evidence="1">
    <location>
        <begin position="123"/>
        <end position="131"/>
    </location>
    <ligand>
        <name>5-phospho-alpha-D-ribose 1-diphosphate</name>
        <dbReference type="ChEBI" id="CHEBI:58017"/>
        <note>ligand shared between dimeric partners</note>
    </ligand>
</feature>
<feature type="binding site" evidence="1">
    <location>
        <position position="127"/>
    </location>
    <ligand>
        <name>orotate</name>
        <dbReference type="ChEBI" id="CHEBI:30839"/>
    </ligand>
</feature>
<feature type="binding site" evidence="1">
    <location>
        <position position="155"/>
    </location>
    <ligand>
        <name>orotate</name>
        <dbReference type="ChEBI" id="CHEBI:30839"/>
    </ligand>
</feature>
<keyword id="KW-0328">Glycosyltransferase</keyword>
<keyword id="KW-0460">Magnesium</keyword>
<keyword id="KW-0665">Pyrimidine biosynthesis</keyword>
<keyword id="KW-1185">Reference proteome</keyword>
<keyword id="KW-0808">Transferase</keyword>
<accession>A4G1L0</accession>
<protein>
    <recommendedName>
        <fullName evidence="1">Orotate phosphoribosyltransferase</fullName>
        <shortName evidence="1">OPRT</shortName>
        <shortName evidence="1">OPRTase</shortName>
        <ecNumber evidence="1">2.4.2.10</ecNumber>
    </recommendedName>
</protein>
<comment type="function">
    <text evidence="1">Catalyzes the transfer of a ribosyl phosphate group from 5-phosphoribose 1-diphosphate to orotate, leading to the formation of orotidine monophosphate (OMP).</text>
</comment>
<comment type="catalytic activity">
    <reaction evidence="1">
        <text>orotidine 5'-phosphate + diphosphate = orotate + 5-phospho-alpha-D-ribose 1-diphosphate</text>
        <dbReference type="Rhea" id="RHEA:10380"/>
        <dbReference type="ChEBI" id="CHEBI:30839"/>
        <dbReference type="ChEBI" id="CHEBI:33019"/>
        <dbReference type="ChEBI" id="CHEBI:57538"/>
        <dbReference type="ChEBI" id="CHEBI:58017"/>
        <dbReference type="EC" id="2.4.2.10"/>
    </reaction>
</comment>
<comment type="cofactor">
    <cofactor evidence="1">
        <name>Mg(2+)</name>
        <dbReference type="ChEBI" id="CHEBI:18420"/>
    </cofactor>
</comment>
<comment type="pathway">
    <text evidence="1">Pyrimidine metabolism; UMP biosynthesis via de novo pathway; UMP from orotate: step 1/2.</text>
</comment>
<comment type="subunit">
    <text evidence="1">Homodimer.</text>
</comment>
<comment type="similarity">
    <text evidence="1">Belongs to the purine/pyrimidine phosphoribosyltransferase family. PyrE subfamily.</text>
</comment>
<dbReference type="EC" id="2.4.2.10" evidence="1"/>
<dbReference type="EMBL" id="CU207211">
    <property type="protein sequence ID" value="CAL60397.1"/>
    <property type="molecule type" value="Genomic_DNA"/>
</dbReference>
<dbReference type="SMR" id="A4G1L0"/>
<dbReference type="STRING" id="204773.HEAR0162"/>
<dbReference type="KEGG" id="har:HEAR0162"/>
<dbReference type="eggNOG" id="COG0461">
    <property type="taxonomic scope" value="Bacteria"/>
</dbReference>
<dbReference type="HOGENOM" id="CLU_074878_0_1_4"/>
<dbReference type="OrthoDB" id="9779060at2"/>
<dbReference type="UniPathway" id="UPA00070">
    <property type="reaction ID" value="UER00119"/>
</dbReference>
<dbReference type="Proteomes" id="UP000006697">
    <property type="component" value="Chromosome"/>
</dbReference>
<dbReference type="GO" id="GO:0005737">
    <property type="term" value="C:cytoplasm"/>
    <property type="evidence" value="ECO:0007669"/>
    <property type="project" value="TreeGrafter"/>
</dbReference>
<dbReference type="GO" id="GO:0000287">
    <property type="term" value="F:magnesium ion binding"/>
    <property type="evidence" value="ECO:0007669"/>
    <property type="project" value="UniProtKB-UniRule"/>
</dbReference>
<dbReference type="GO" id="GO:0004588">
    <property type="term" value="F:orotate phosphoribosyltransferase activity"/>
    <property type="evidence" value="ECO:0007669"/>
    <property type="project" value="UniProtKB-UniRule"/>
</dbReference>
<dbReference type="GO" id="GO:0006207">
    <property type="term" value="P:'de novo' pyrimidine nucleobase biosynthetic process"/>
    <property type="evidence" value="ECO:0007669"/>
    <property type="project" value="TreeGrafter"/>
</dbReference>
<dbReference type="GO" id="GO:0044205">
    <property type="term" value="P:'de novo' UMP biosynthetic process"/>
    <property type="evidence" value="ECO:0007669"/>
    <property type="project" value="UniProtKB-UniRule"/>
</dbReference>
<dbReference type="GO" id="GO:0046132">
    <property type="term" value="P:pyrimidine ribonucleoside biosynthetic process"/>
    <property type="evidence" value="ECO:0007669"/>
    <property type="project" value="TreeGrafter"/>
</dbReference>
<dbReference type="CDD" id="cd06223">
    <property type="entry name" value="PRTases_typeI"/>
    <property type="match status" value="1"/>
</dbReference>
<dbReference type="FunFam" id="3.40.50.2020:FF:000008">
    <property type="entry name" value="Orotate phosphoribosyltransferase"/>
    <property type="match status" value="1"/>
</dbReference>
<dbReference type="Gene3D" id="3.40.50.2020">
    <property type="match status" value="1"/>
</dbReference>
<dbReference type="HAMAP" id="MF_01208">
    <property type="entry name" value="PyrE"/>
    <property type="match status" value="1"/>
</dbReference>
<dbReference type="InterPro" id="IPR023031">
    <property type="entry name" value="OPRT"/>
</dbReference>
<dbReference type="InterPro" id="IPR004467">
    <property type="entry name" value="Or_phspho_trans_dom"/>
</dbReference>
<dbReference type="InterPro" id="IPR000836">
    <property type="entry name" value="PRibTrfase_dom"/>
</dbReference>
<dbReference type="InterPro" id="IPR029057">
    <property type="entry name" value="PRTase-like"/>
</dbReference>
<dbReference type="NCBIfam" id="TIGR00336">
    <property type="entry name" value="pyrE"/>
    <property type="match status" value="1"/>
</dbReference>
<dbReference type="PANTHER" id="PTHR46683">
    <property type="entry name" value="OROTATE PHOSPHORIBOSYLTRANSFERASE 1-RELATED"/>
    <property type="match status" value="1"/>
</dbReference>
<dbReference type="PANTHER" id="PTHR46683:SF1">
    <property type="entry name" value="OROTATE PHOSPHORIBOSYLTRANSFERASE 1-RELATED"/>
    <property type="match status" value="1"/>
</dbReference>
<dbReference type="Pfam" id="PF00156">
    <property type="entry name" value="Pribosyltran"/>
    <property type="match status" value="1"/>
</dbReference>
<dbReference type="SUPFAM" id="SSF53271">
    <property type="entry name" value="PRTase-like"/>
    <property type="match status" value="1"/>
</dbReference>
<dbReference type="PROSITE" id="PS00103">
    <property type="entry name" value="PUR_PYR_PR_TRANSFER"/>
    <property type="match status" value="1"/>
</dbReference>
<reference key="1">
    <citation type="journal article" date="2007" name="PLoS Genet.">
        <title>A tale of two oxidation states: bacterial colonization of arsenic-rich environments.</title>
        <authorList>
            <person name="Muller D."/>
            <person name="Medigue C."/>
            <person name="Koechler S."/>
            <person name="Barbe V."/>
            <person name="Barakat M."/>
            <person name="Talla E."/>
            <person name="Bonnefoy V."/>
            <person name="Krin E."/>
            <person name="Arsene-Ploetze F."/>
            <person name="Carapito C."/>
            <person name="Chandler M."/>
            <person name="Cournoyer B."/>
            <person name="Cruveiller S."/>
            <person name="Dossat C."/>
            <person name="Duval S."/>
            <person name="Heymann M."/>
            <person name="Leize E."/>
            <person name="Lieutaud A."/>
            <person name="Lievremont D."/>
            <person name="Makita Y."/>
            <person name="Mangenot S."/>
            <person name="Nitschke W."/>
            <person name="Ortet P."/>
            <person name="Perdrial N."/>
            <person name="Schoepp B."/>
            <person name="Siguier P."/>
            <person name="Simeonova D.D."/>
            <person name="Rouy Z."/>
            <person name="Segurens B."/>
            <person name="Turlin E."/>
            <person name="Vallenet D."/>
            <person name="van Dorsselaer A."/>
            <person name="Weiss S."/>
            <person name="Weissenbach J."/>
            <person name="Lett M.-C."/>
            <person name="Danchin A."/>
            <person name="Bertin P.N."/>
        </authorList>
    </citation>
    <scope>NUCLEOTIDE SEQUENCE [LARGE SCALE GENOMIC DNA]</scope>
    <source>
        <strain>ULPAs1</strain>
    </source>
</reference>
<name>PYRE_HERAR</name>
<sequence length="221" mass="23716">MNNLRQEFIKFSVDTGVLRFGEFVTKAGRTSPYFFNAGLFNQGGTLARLADFYAQTLIDSGVEFDMLFGPAYKGITLASATAVALANKGRDVPFAFNRKEAKDHGEGGTMVGAKLQGRVVIIDDVISAGTSVRESVDMIRAAGATPCAVLIALDRMERSGADDALSAYSAVQEVSNTYGMPVISIGNLSDLFEYLSNAGADSEQAQYRDAVSAYRKRYGVT</sequence>
<proteinExistence type="inferred from homology"/>
<organism>
    <name type="scientific">Herminiimonas arsenicoxydans</name>
    <dbReference type="NCBI Taxonomy" id="204773"/>
    <lineage>
        <taxon>Bacteria</taxon>
        <taxon>Pseudomonadati</taxon>
        <taxon>Pseudomonadota</taxon>
        <taxon>Betaproteobacteria</taxon>
        <taxon>Burkholderiales</taxon>
        <taxon>Oxalobacteraceae</taxon>
        <taxon>Herminiimonas</taxon>
    </lineage>
</organism>
<gene>
    <name evidence="1" type="primary">pyrE</name>
    <name type="ordered locus">HEAR0162</name>
</gene>
<evidence type="ECO:0000255" key="1">
    <source>
        <dbReference type="HAMAP-Rule" id="MF_01208"/>
    </source>
</evidence>